<comment type="function">
    <text evidence="1">Regulator of the Hippo/SWH (Sav/Wts/Hpo) signaling pathway, a signaling pathway that plays a pivotal role in organ size control and tumor suppression by restricting proliferation and promoting apoptosis. The core of this pathway is composed of a kinase cascade wherein Hippo (Hpo), in complex with its regulatory protein Salvador (Sav), phosphorylates and activates Warts (Wts) in complex with its regulatory protein Mats, which in turn phosphorylates and inactivates the Yorkie (Yki) oncoprotein. Kibra acts synergistically along with Ex and Mer to regulate the Hippo signaling pathway (By similarity).</text>
</comment>
<comment type="subunit">
    <text evidence="1">Forms a complex with Mer and Ex. Interacts (via domain WW 1) with Ex (via RXPPXY motif). Interacts with Mer, Sav, Hpo and Wts (By similarity).</text>
</comment>
<comment type="subcellular location">
    <subcellularLocation>
        <location evidence="1">Cytoplasm</location>
    </subcellularLocation>
    <subcellularLocation>
        <location evidence="1">Apical cell membrane</location>
    </subcellularLocation>
    <text evidence="1">Localizes at the apical cortex of epithelial cells and cytoplasmic, punctate.</text>
</comment>
<comment type="similarity">
    <text evidence="6">Belongs to the WWC family. KIBRA subfamily.</text>
</comment>
<reference key="1">
    <citation type="journal article" date="2007" name="Nature">
        <title>Evolution of genes and genomes on the Drosophila phylogeny.</title>
        <authorList>
            <consortium name="Drosophila 12 genomes consortium"/>
        </authorList>
    </citation>
    <scope>NUCLEOTIDE SEQUENCE [LARGE SCALE GENOMIC DNA]</scope>
    <source>
        <strain>Tucson 15081-1352.22</strain>
    </source>
</reference>
<sequence>MSNQQQQQLPRQLPQPHPHHHHHHHQQQPGQHSEFPLPDGWDIARDFDGKTYYIDHINKKTTWLDPRDRYTKPQSFEDCVGDELPVGWEEAYDSNIGRYYINHIAQTTQLEDPRQEWKSVQEQMLSDYLSAAQDQLENKREMYDVKQQRLNLAQEEYNHLNKLAASRSSLCSSSSSMSRHDPELLRADLMLARERVRQLKQELNHITNDISYTERGMNTLYSVGEKINARQNGCYDIAEVQAIREEMLKVHKSLVSGEKVREELMRSLVQIKNELSRQQINEENAELLSATSPFDRVCVASQTDLCGAGEHLNGGARFAEMAKTKLQYAEWRKHIKKLQQQLADHVERIEPGQLESDKDRILLIQEKEKLLNDLNSISLKSRSAEEKLVIQQTRHKLEEDLKEAYEATNTCVANRLRFHEEKQLLLAKLQEALKSTNLLEERLKSFSSESTFSISSGSSLGSLSTASSKSALSFTDIYIDPFAVGESPIDVVDLQRRSQRLFQQHQRLPPVHPAVQLQQQHQLQQQTQPQPASEVSLSPRSSLSIETPPASPMKYNAIADQPQAQAQAALKEEPTYANAMPAPPAYTAPPSVPMALAAVRTHPYDLDSTVLDCMMLEAKLQKLNLSSPLNLNGPLSPISEKPSLLDLPQEMLSRSSSTSNTRSVSAAVSNESVAGDSGVFEASRAHLPRKELAQVQIGLKYLKQEGVLVVSLERANNLSALWTATTDNSQVYLRAALLPNSLTSIRTKALGDFQKPVFNDTFAVPISLDKLLTKSLQVTVVTMTGQKEEIIGTVQISMAEFNPDDSTLKWYNVLSSKFIPTFESLDLPSTSAAAAAAAVAASNNIINNNNNNNNNNIREESSDESTITSSQTSTLTRNQAPPLELQAQIAEELPEHVRLNEQQCSDDDDDDDEEEDEQQLVGTLGLTHSGCMLDAYLENMKQEYADKETNTDCAFPPEKLRSQTQLLDDRPVKRSQTFTPSAAVSKNRYNCRLNRSDSDSAMHFGVTPHTFHRGAVERRSLRFQPKATKSVTKLHHTHIPRTSLDLELDLQAQHSKLYFLNDQISKLQNLKEVLQKACDNKDPLIAAWAIENEEFQRLVARADPTKCPEERLLQKLLMKTTKEIHKLRKTKVPKGCPDLVSFKEKMFFFTRKGMSVPELPNDFLLPDAQAIEEEEEDDDEDNVAETAIAINTALVASSNRNKNLSEHHHRSTGGAVSKLTATPTPAINPAPVATPVPATSNANEANGEQQRYDYVVDRNYGVEV</sequence>
<name>KIBRA_DROMO</name>
<protein>
    <recommendedName>
        <fullName>Protein kibra</fullName>
    </recommendedName>
</protein>
<gene>
    <name type="primary">Kibra</name>
    <name type="ORF">GI10447</name>
</gene>
<organism>
    <name type="scientific">Drosophila mojavensis</name>
    <name type="common">Fruit fly</name>
    <dbReference type="NCBI Taxonomy" id="7230"/>
    <lineage>
        <taxon>Eukaryota</taxon>
        <taxon>Metazoa</taxon>
        <taxon>Ecdysozoa</taxon>
        <taxon>Arthropoda</taxon>
        <taxon>Hexapoda</taxon>
        <taxon>Insecta</taxon>
        <taxon>Pterygota</taxon>
        <taxon>Neoptera</taxon>
        <taxon>Endopterygota</taxon>
        <taxon>Diptera</taxon>
        <taxon>Brachycera</taxon>
        <taxon>Muscomorpha</taxon>
        <taxon>Ephydroidea</taxon>
        <taxon>Drosophilidae</taxon>
        <taxon>Drosophila</taxon>
    </lineage>
</organism>
<accession>B4K6I9</accession>
<dbReference type="EMBL" id="CH933806">
    <property type="protein sequence ID" value="EDW16289.1"/>
    <property type="molecule type" value="Genomic_DNA"/>
</dbReference>
<dbReference type="FunCoup" id="B4K6I9">
    <property type="interactions" value="300"/>
</dbReference>
<dbReference type="EnsemblMetazoa" id="FBtr0161172">
    <property type="protein sequence ID" value="FBpp0159664"/>
    <property type="gene ID" value="FBgn0133211"/>
</dbReference>
<dbReference type="EnsemblMetazoa" id="XM_002000792.4">
    <property type="protein sequence ID" value="XP_002000828.1"/>
    <property type="gene ID" value="LOC6574800"/>
</dbReference>
<dbReference type="GeneID" id="6574800"/>
<dbReference type="KEGG" id="dmo:Dmoj_GI10447"/>
<dbReference type="CTD" id="41783"/>
<dbReference type="eggNOG" id="KOG0940">
    <property type="taxonomic scope" value="Eukaryota"/>
</dbReference>
<dbReference type="eggNOG" id="KOG3209">
    <property type="taxonomic scope" value="Eukaryota"/>
</dbReference>
<dbReference type="HOGENOM" id="CLU_005420_1_0_1"/>
<dbReference type="InParanoid" id="B4K6I9"/>
<dbReference type="OMA" id="QVTVVSM"/>
<dbReference type="OrthoDB" id="2020426at2759"/>
<dbReference type="PhylomeDB" id="B4K6I9"/>
<dbReference type="ChiTaRS" id="kibra">
    <property type="organism name" value="fly"/>
</dbReference>
<dbReference type="Proteomes" id="UP000009192">
    <property type="component" value="Unassembled WGS sequence"/>
</dbReference>
<dbReference type="GO" id="GO:0016324">
    <property type="term" value="C:apical plasma membrane"/>
    <property type="evidence" value="ECO:0007669"/>
    <property type="project" value="UniProtKB-SubCell"/>
</dbReference>
<dbReference type="GO" id="GO:0005737">
    <property type="term" value="C:cytoplasm"/>
    <property type="evidence" value="ECO:0007669"/>
    <property type="project" value="UniProtKB-SubCell"/>
</dbReference>
<dbReference type="GO" id="GO:0019900">
    <property type="term" value="F:kinase binding"/>
    <property type="evidence" value="ECO:0007669"/>
    <property type="project" value="TreeGrafter"/>
</dbReference>
<dbReference type="GO" id="GO:0060090">
    <property type="term" value="F:molecular adaptor activity"/>
    <property type="evidence" value="ECO:0007669"/>
    <property type="project" value="TreeGrafter"/>
</dbReference>
<dbReference type="GO" id="GO:0016477">
    <property type="term" value="P:cell migration"/>
    <property type="evidence" value="ECO:0007669"/>
    <property type="project" value="TreeGrafter"/>
</dbReference>
<dbReference type="GO" id="GO:0046621">
    <property type="term" value="P:negative regulation of organ growth"/>
    <property type="evidence" value="ECO:0007669"/>
    <property type="project" value="TreeGrafter"/>
</dbReference>
<dbReference type="GO" id="GO:0035332">
    <property type="term" value="P:positive regulation of hippo signaling"/>
    <property type="evidence" value="ECO:0000250"/>
    <property type="project" value="UniProtKB"/>
</dbReference>
<dbReference type="GO" id="GO:0006355">
    <property type="term" value="P:regulation of DNA-templated transcription"/>
    <property type="evidence" value="ECO:0007669"/>
    <property type="project" value="TreeGrafter"/>
</dbReference>
<dbReference type="CDD" id="cd00201">
    <property type="entry name" value="WW"/>
    <property type="match status" value="2"/>
</dbReference>
<dbReference type="FunFam" id="2.60.40.150:FF:000228">
    <property type="entry name" value="Blast:Protein kibra"/>
    <property type="match status" value="1"/>
</dbReference>
<dbReference type="FunFam" id="2.20.70.10:FF:000041">
    <property type="entry name" value="WW and C2 domain containing 1"/>
    <property type="match status" value="1"/>
</dbReference>
<dbReference type="Gene3D" id="2.20.70.10">
    <property type="match status" value="2"/>
</dbReference>
<dbReference type="Gene3D" id="2.60.40.150">
    <property type="entry name" value="C2 domain"/>
    <property type="match status" value="1"/>
</dbReference>
<dbReference type="InterPro" id="IPR000008">
    <property type="entry name" value="C2_dom"/>
</dbReference>
<dbReference type="InterPro" id="IPR035892">
    <property type="entry name" value="C2_domain_sf"/>
</dbReference>
<dbReference type="InterPro" id="IPR001202">
    <property type="entry name" value="WW_dom"/>
</dbReference>
<dbReference type="InterPro" id="IPR036020">
    <property type="entry name" value="WW_dom_sf"/>
</dbReference>
<dbReference type="InterPro" id="IPR051105">
    <property type="entry name" value="WWC/KIBRA_Hippo_Reg"/>
</dbReference>
<dbReference type="PANTHER" id="PTHR14791">
    <property type="entry name" value="BOMB/KIRA PROTEINS"/>
    <property type="match status" value="1"/>
</dbReference>
<dbReference type="PANTHER" id="PTHR14791:SF29">
    <property type="entry name" value="PROTEIN KIBRA"/>
    <property type="match status" value="1"/>
</dbReference>
<dbReference type="Pfam" id="PF00168">
    <property type="entry name" value="C2"/>
    <property type="match status" value="1"/>
</dbReference>
<dbReference type="Pfam" id="PF00397">
    <property type="entry name" value="WW"/>
    <property type="match status" value="2"/>
</dbReference>
<dbReference type="SMART" id="SM00239">
    <property type="entry name" value="C2"/>
    <property type="match status" value="1"/>
</dbReference>
<dbReference type="SMART" id="SM00456">
    <property type="entry name" value="WW"/>
    <property type="match status" value="2"/>
</dbReference>
<dbReference type="SUPFAM" id="SSF49562">
    <property type="entry name" value="C2 domain (Calcium/lipid-binding domain, CaLB)"/>
    <property type="match status" value="1"/>
</dbReference>
<dbReference type="SUPFAM" id="SSF51045">
    <property type="entry name" value="WW domain"/>
    <property type="match status" value="2"/>
</dbReference>
<dbReference type="PROSITE" id="PS50004">
    <property type="entry name" value="C2"/>
    <property type="match status" value="1"/>
</dbReference>
<dbReference type="PROSITE" id="PS01159">
    <property type="entry name" value="WW_DOMAIN_1"/>
    <property type="match status" value="1"/>
</dbReference>
<dbReference type="PROSITE" id="PS50020">
    <property type="entry name" value="WW_DOMAIN_2"/>
    <property type="match status" value="2"/>
</dbReference>
<feature type="chain" id="PRO_0000392972" description="Protein kibra">
    <location>
        <begin position="1"/>
        <end position="1264"/>
    </location>
</feature>
<feature type="domain" description="WW 1" evidence="4">
    <location>
        <begin position="35"/>
        <end position="68"/>
    </location>
</feature>
<feature type="domain" description="WW 2" evidence="4">
    <location>
        <begin position="82"/>
        <end position="115"/>
    </location>
</feature>
<feature type="domain" description="C2" evidence="3">
    <location>
        <begin position="691"/>
        <end position="811"/>
    </location>
</feature>
<feature type="region of interest" description="Disordered" evidence="5">
    <location>
        <begin position="1"/>
        <end position="40"/>
    </location>
</feature>
<feature type="region of interest" description="Disordered" evidence="5">
    <location>
        <begin position="513"/>
        <end position="545"/>
    </location>
</feature>
<feature type="region of interest" description="Disordered" evidence="5">
    <location>
        <begin position="845"/>
        <end position="880"/>
    </location>
</feature>
<feature type="region of interest" description="Disordered" evidence="5">
    <location>
        <begin position="1200"/>
        <end position="1254"/>
    </location>
</feature>
<feature type="coiled-coil region" evidence="2">
    <location>
        <begin position="129"/>
        <end position="215"/>
    </location>
</feature>
<feature type="coiled-coil region" evidence="2">
    <location>
        <begin position="258"/>
        <end position="288"/>
    </location>
</feature>
<feature type="coiled-coil region" evidence="2">
    <location>
        <begin position="319"/>
        <end position="445"/>
    </location>
</feature>
<feature type="compositionally biased region" description="Low complexity" evidence="5">
    <location>
        <begin position="1"/>
        <end position="14"/>
    </location>
</feature>
<feature type="compositionally biased region" description="Basic residues" evidence="5">
    <location>
        <begin position="17"/>
        <end position="26"/>
    </location>
</feature>
<feature type="compositionally biased region" description="Low complexity" evidence="5">
    <location>
        <begin position="513"/>
        <end position="544"/>
    </location>
</feature>
<feature type="compositionally biased region" description="Low complexity" evidence="5">
    <location>
        <begin position="845"/>
        <end position="856"/>
    </location>
</feature>
<feature type="compositionally biased region" description="Low complexity" evidence="5">
    <location>
        <begin position="864"/>
        <end position="876"/>
    </location>
</feature>
<keyword id="KW-1003">Cell membrane</keyword>
<keyword id="KW-0175">Coiled coil</keyword>
<keyword id="KW-0963">Cytoplasm</keyword>
<keyword id="KW-0472">Membrane</keyword>
<keyword id="KW-0597">Phosphoprotein</keyword>
<keyword id="KW-1185">Reference proteome</keyword>
<keyword id="KW-0677">Repeat</keyword>
<keyword id="KW-0804">Transcription</keyword>
<keyword id="KW-0805">Transcription regulation</keyword>
<evidence type="ECO:0000250" key="1"/>
<evidence type="ECO:0000255" key="2"/>
<evidence type="ECO:0000255" key="3">
    <source>
        <dbReference type="PROSITE-ProRule" id="PRU00041"/>
    </source>
</evidence>
<evidence type="ECO:0000255" key="4">
    <source>
        <dbReference type="PROSITE-ProRule" id="PRU00224"/>
    </source>
</evidence>
<evidence type="ECO:0000256" key="5">
    <source>
        <dbReference type="SAM" id="MobiDB-lite"/>
    </source>
</evidence>
<evidence type="ECO:0000305" key="6"/>
<proteinExistence type="inferred from homology"/>